<proteinExistence type="inferred from homology"/>
<evidence type="ECO:0000255" key="1">
    <source>
        <dbReference type="HAMAP-Rule" id="MF_00375"/>
    </source>
</evidence>
<evidence type="ECO:0000256" key="2">
    <source>
        <dbReference type="SAM" id="MobiDB-lite"/>
    </source>
</evidence>
<dbReference type="EC" id="5.4.3.8" evidence="1"/>
<dbReference type="EMBL" id="AP010918">
    <property type="protein sequence ID" value="BAH24833.1"/>
    <property type="molecule type" value="Genomic_DNA"/>
</dbReference>
<dbReference type="RefSeq" id="WP_003402844.1">
    <property type="nucleotide sequence ID" value="NZ_CP014566.1"/>
</dbReference>
<dbReference type="SMR" id="C1AKK4"/>
<dbReference type="KEGG" id="mbt:JTY_0537"/>
<dbReference type="HOGENOM" id="CLU_016922_1_5_11"/>
<dbReference type="UniPathway" id="UPA00251">
    <property type="reaction ID" value="UER00317"/>
</dbReference>
<dbReference type="GO" id="GO:0005737">
    <property type="term" value="C:cytoplasm"/>
    <property type="evidence" value="ECO:0007669"/>
    <property type="project" value="UniProtKB-SubCell"/>
</dbReference>
<dbReference type="GO" id="GO:0042286">
    <property type="term" value="F:glutamate-1-semialdehyde 2,1-aminomutase activity"/>
    <property type="evidence" value="ECO:0007669"/>
    <property type="project" value="UniProtKB-UniRule"/>
</dbReference>
<dbReference type="GO" id="GO:0030170">
    <property type="term" value="F:pyridoxal phosphate binding"/>
    <property type="evidence" value="ECO:0007669"/>
    <property type="project" value="InterPro"/>
</dbReference>
<dbReference type="GO" id="GO:0008483">
    <property type="term" value="F:transaminase activity"/>
    <property type="evidence" value="ECO:0007669"/>
    <property type="project" value="InterPro"/>
</dbReference>
<dbReference type="GO" id="GO:0006782">
    <property type="term" value="P:protoporphyrinogen IX biosynthetic process"/>
    <property type="evidence" value="ECO:0007669"/>
    <property type="project" value="UniProtKB-UniRule"/>
</dbReference>
<dbReference type="CDD" id="cd00610">
    <property type="entry name" value="OAT_like"/>
    <property type="match status" value="1"/>
</dbReference>
<dbReference type="FunFam" id="3.40.640.10:FF:000021">
    <property type="entry name" value="Glutamate-1-semialdehyde 2,1-aminomutase"/>
    <property type="match status" value="1"/>
</dbReference>
<dbReference type="Gene3D" id="3.90.1150.10">
    <property type="entry name" value="Aspartate Aminotransferase, domain 1"/>
    <property type="match status" value="1"/>
</dbReference>
<dbReference type="Gene3D" id="3.40.640.10">
    <property type="entry name" value="Type I PLP-dependent aspartate aminotransferase-like (Major domain)"/>
    <property type="match status" value="1"/>
</dbReference>
<dbReference type="HAMAP" id="MF_00375">
    <property type="entry name" value="HemL_aminotrans_3"/>
    <property type="match status" value="1"/>
</dbReference>
<dbReference type="InterPro" id="IPR004639">
    <property type="entry name" value="4pyrrol_synth_GluAld_NH2Trfase"/>
</dbReference>
<dbReference type="InterPro" id="IPR005814">
    <property type="entry name" value="Aminotrans_3"/>
</dbReference>
<dbReference type="InterPro" id="IPR049704">
    <property type="entry name" value="Aminotrans_3_PPA_site"/>
</dbReference>
<dbReference type="InterPro" id="IPR015424">
    <property type="entry name" value="PyrdxlP-dep_Trfase"/>
</dbReference>
<dbReference type="InterPro" id="IPR015421">
    <property type="entry name" value="PyrdxlP-dep_Trfase_major"/>
</dbReference>
<dbReference type="InterPro" id="IPR015422">
    <property type="entry name" value="PyrdxlP-dep_Trfase_small"/>
</dbReference>
<dbReference type="NCBIfam" id="TIGR00713">
    <property type="entry name" value="hemL"/>
    <property type="match status" value="1"/>
</dbReference>
<dbReference type="NCBIfam" id="NF000818">
    <property type="entry name" value="PRK00062.1"/>
    <property type="match status" value="1"/>
</dbReference>
<dbReference type="PANTHER" id="PTHR43713">
    <property type="entry name" value="GLUTAMATE-1-SEMIALDEHYDE 2,1-AMINOMUTASE"/>
    <property type="match status" value="1"/>
</dbReference>
<dbReference type="PANTHER" id="PTHR43713:SF3">
    <property type="entry name" value="GLUTAMATE-1-SEMIALDEHYDE 2,1-AMINOMUTASE 1, CHLOROPLASTIC-RELATED"/>
    <property type="match status" value="1"/>
</dbReference>
<dbReference type="Pfam" id="PF00202">
    <property type="entry name" value="Aminotran_3"/>
    <property type="match status" value="1"/>
</dbReference>
<dbReference type="SUPFAM" id="SSF53383">
    <property type="entry name" value="PLP-dependent transferases"/>
    <property type="match status" value="1"/>
</dbReference>
<dbReference type="PROSITE" id="PS00600">
    <property type="entry name" value="AA_TRANSFER_CLASS_3"/>
    <property type="match status" value="1"/>
</dbReference>
<reference key="1">
    <citation type="journal article" date="2009" name="Vaccine">
        <title>Whole genome sequence analysis of Mycobacterium bovis bacillus Calmette-Guerin (BCG) Tokyo 172: a comparative study of BCG vaccine substrains.</title>
        <authorList>
            <person name="Seki M."/>
            <person name="Honda I."/>
            <person name="Fujita I."/>
            <person name="Yano I."/>
            <person name="Yamamoto S."/>
            <person name="Koyama A."/>
        </authorList>
    </citation>
    <scope>NUCLEOTIDE SEQUENCE [LARGE SCALE GENOMIC DNA]</scope>
    <source>
        <strain>BCG / Tokyo 172 / ATCC 35737 / TMC 1019</strain>
    </source>
</reference>
<feature type="chain" id="PRO_1000201026" description="Glutamate-1-semialdehyde 2,1-aminomutase">
    <location>
        <begin position="1"/>
        <end position="462"/>
    </location>
</feature>
<feature type="region of interest" description="Disordered" evidence="2">
    <location>
        <begin position="178"/>
        <end position="200"/>
    </location>
</feature>
<feature type="compositionally biased region" description="Low complexity" evidence="2">
    <location>
        <begin position="182"/>
        <end position="192"/>
    </location>
</feature>
<feature type="modified residue" description="N6-(pyridoxal phosphate)lysine" evidence="1">
    <location>
        <position position="297"/>
    </location>
</feature>
<organism>
    <name type="scientific">Mycobacterium bovis (strain BCG / Tokyo 172 / ATCC 35737 / TMC 1019)</name>
    <dbReference type="NCBI Taxonomy" id="561275"/>
    <lineage>
        <taxon>Bacteria</taxon>
        <taxon>Bacillati</taxon>
        <taxon>Actinomycetota</taxon>
        <taxon>Actinomycetes</taxon>
        <taxon>Mycobacteriales</taxon>
        <taxon>Mycobacteriaceae</taxon>
        <taxon>Mycobacterium</taxon>
        <taxon>Mycobacterium tuberculosis complex</taxon>
    </lineage>
</organism>
<sequence>MGSTEQATSRVRGAARTSAQLFEAACSVIPGGVNSPVRAFTAVGGTPRFITEAHGCWLIDADGNRYVDLVCSWGPMILGHAHPAVVEAVAKAAARGLSFGAPTPAETQLAGEIIGRVAPVERIRLVNSGTEATMSAVRLARGFTGRAKIVKFSGCYHGHVDALLADAGSGVATLGLCDDPQRPASPRSQSSRGLPSSPGVTGAAAADTIVLPYNDIDAVQQTFARFGEQIAAVITEASPGNMGVVPPGPGFNAALRAITAEHGALLILDEVMTGFRVSRSGWYGIDPVPADLFAFGKVMSGGMPAAAFGGRAEVMQRLAPLGPVYQAGTLSGNPVAVAAGLATLRAADDAVYTALDANADRLAGLLSEALTDAVVPHQISRAGNMLSVFFGETPVTDFASARASQTWRYPAFFHAMLDAGVYPPCSAFEAWFVSAALDDAAFGRIANALPAAARAAAQERPA</sequence>
<comment type="catalytic activity">
    <reaction evidence="1">
        <text>(S)-4-amino-5-oxopentanoate = 5-aminolevulinate</text>
        <dbReference type="Rhea" id="RHEA:14265"/>
        <dbReference type="ChEBI" id="CHEBI:57501"/>
        <dbReference type="ChEBI" id="CHEBI:356416"/>
        <dbReference type="EC" id="5.4.3.8"/>
    </reaction>
</comment>
<comment type="cofactor">
    <cofactor evidence="1">
        <name>pyridoxal 5'-phosphate</name>
        <dbReference type="ChEBI" id="CHEBI:597326"/>
    </cofactor>
</comment>
<comment type="pathway">
    <text evidence="1">Porphyrin-containing compound metabolism; protoporphyrin-IX biosynthesis; 5-aminolevulinate from L-glutamyl-tRNA(Glu): step 2/2.</text>
</comment>
<comment type="subunit">
    <text evidence="1">Homodimer.</text>
</comment>
<comment type="subcellular location">
    <subcellularLocation>
        <location evidence="1">Cytoplasm</location>
    </subcellularLocation>
</comment>
<comment type="similarity">
    <text evidence="1">Belongs to the class-III pyridoxal-phosphate-dependent aminotransferase family. HemL subfamily.</text>
</comment>
<accession>C1AKK4</accession>
<name>GSA_MYCBT</name>
<keyword id="KW-0963">Cytoplasm</keyword>
<keyword id="KW-0413">Isomerase</keyword>
<keyword id="KW-0627">Porphyrin biosynthesis</keyword>
<keyword id="KW-0663">Pyridoxal phosphate</keyword>
<protein>
    <recommendedName>
        <fullName evidence="1">Glutamate-1-semialdehyde 2,1-aminomutase</fullName>
        <shortName evidence="1">GSA</shortName>
        <ecNumber evidence="1">5.4.3.8</ecNumber>
    </recommendedName>
    <alternativeName>
        <fullName evidence="1">Glutamate-1-semialdehyde aminotransferase</fullName>
        <shortName evidence="1">GSA-AT</shortName>
    </alternativeName>
</protein>
<gene>
    <name evidence="1" type="primary">hemL</name>
    <name type="ordered locus">JTY_0537</name>
</gene>